<sequence>MEQTYVMVKPDGVQRGLVGEVISRIEKRGLKILALRMNVIAEATAKEHYGEHAARPFFPSLIEFITSGPSVSMVVAGKDAIKVMRAINGATNPVDAAPGTIRGDFALDVGRNVVHASDSPEAAAREIAIHFKDSEIGKYSRVDEVCLYE</sequence>
<dbReference type="EC" id="2.7.4.6" evidence="1"/>
<dbReference type="EMBL" id="AE010299">
    <property type="protein sequence ID" value="AAM04938.1"/>
    <property type="status" value="ALT_INIT"/>
    <property type="molecule type" value="Genomic_DNA"/>
</dbReference>
<dbReference type="RefSeq" id="WP_048065142.1">
    <property type="nucleotide sequence ID" value="NC_003552.1"/>
</dbReference>
<dbReference type="SMR" id="Q8TQL6"/>
<dbReference type="FunCoup" id="Q8TQL6">
    <property type="interactions" value="261"/>
</dbReference>
<dbReference type="STRING" id="188937.MA_1524"/>
<dbReference type="EnsemblBacteria" id="AAM04938">
    <property type="protein sequence ID" value="AAM04938"/>
    <property type="gene ID" value="MA_1524"/>
</dbReference>
<dbReference type="GeneID" id="1473412"/>
<dbReference type="KEGG" id="mac:MA_1524"/>
<dbReference type="HOGENOM" id="CLU_060216_6_3_2"/>
<dbReference type="InParanoid" id="Q8TQL6"/>
<dbReference type="OrthoDB" id="6874at2157"/>
<dbReference type="PhylomeDB" id="Q8TQL6"/>
<dbReference type="Proteomes" id="UP000002487">
    <property type="component" value="Chromosome"/>
</dbReference>
<dbReference type="GO" id="GO:0005737">
    <property type="term" value="C:cytoplasm"/>
    <property type="evidence" value="ECO:0007669"/>
    <property type="project" value="UniProtKB-SubCell"/>
</dbReference>
<dbReference type="GO" id="GO:0005524">
    <property type="term" value="F:ATP binding"/>
    <property type="evidence" value="ECO:0007669"/>
    <property type="project" value="UniProtKB-UniRule"/>
</dbReference>
<dbReference type="GO" id="GO:0046872">
    <property type="term" value="F:metal ion binding"/>
    <property type="evidence" value="ECO:0007669"/>
    <property type="project" value="UniProtKB-KW"/>
</dbReference>
<dbReference type="GO" id="GO:0004550">
    <property type="term" value="F:nucleoside diphosphate kinase activity"/>
    <property type="evidence" value="ECO:0007669"/>
    <property type="project" value="UniProtKB-UniRule"/>
</dbReference>
<dbReference type="GO" id="GO:0006241">
    <property type="term" value="P:CTP biosynthetic process"/>
    <property type="evidence" value="ECO:0007669"/>
    <property type="project" value="UniProtKB-UniRule"/>
</dbReference>
<dbReference type="GO" id="GO:0006183">
    <property type="term" value="P:GTP biosynthetic process"/>
    <property type="evidence" value="ECO:0007669"/>
    <property type="project" value="UniProtKB-UniRule"/>
</dbReference>
<dbReference type="GO" id="GO:0006228">
    <property type="term" value="P:UTP biosynthetic process"/>
    <property type="evidence" value="ECO:0007669"/>
    <property type="project" value="UniProtKB-UniRule"/>
</dbReference>
<dbReference type="CDD" id="cd04413">
    <property type="entry name" value="NDPk_I"/>
    <property type="match status" value="1"/>
</dbReference>
<dbReference type="FunFam" id="3.30.70.141:FF:000003">
    <property type="entry name" value="Nucleoside diphosphate kinase"/>
    <property type="match status" value="1"/>
</dbReference>
<dbReference type="Gene3D" id="3.30.70.141">
    <property type="entry name" value="Nucleoside diphosphate kinase-like domain"/>
    <property type="match status" value="1"/>
</dbReference>
<dbReference type="HAMAP" id="MF_00451">
    <property type="entry name" value="NDP_kinase"/>
    <property type="match status" value="1"/>
</dbReference>
<dbReference type="InterPro" id="IPR034907">
    <property type="entry name" value="NDK-like_dom"/>
</dbReference>
<dbReference type="InterPro" id="IPR036850">
    <property type="entry name" value="NDK-like_dom_sf"/>
</dbReference>
<dbReference type="InterPro" id="IPR001564">
    <property type="entry name" value="Nucleoside_diP_kinase"/>
</dbReference>
<dbReference type="InterPro" id="IPR023005">
    <property type="entry name" value="Nucleoside_diP_kinase_AS"/>
</dbReference>
<dbReference type="NCBIfam" id="NF001908">
    <property type="entry name" value="PRK00668.1"/>
    <property type="match status" value="1"/>
</dbReference>
<dbReference type="PANTHER" id="PTHR11349">
    <property type="entry name" value="NUCLEOSIDE DIPHOSPHATE KINASE"/>
    <property type="match status" value="1"/>
</dbReference>
<dbReference type="Pfam" id="PF00334">
    <property type="entry name" value="NDK"/>
    <property type="match status" value="1"/>
</dbReference>
<dbReference type="PRINTS" id="PR01243">
    <property type="entry name" value="NUCDPKINASE"/>
</dbReference>
<dbReference type="SMART" id="SM00562">
    <property type="entry name" value="NDK"/>
    <property type="match status" value="1"/>
</dbReference>
<dbReference type="SUPFAM" id="SSF54919">
    <property type="entry name" value="Nucleoside diphosphate kinase, NDK"/>
    <property type="match status" value="1"/>
</dbReference>
<dbReference type="PROSITE" id="PS00469">
    <property type="entry name" value="NDPK"/>
    <property type="match status" value="1"/>
</dbReference>
<dbReference type="PROSITE" id="PS51374">
    <property type="entry name" value="NDPK_LIKE"/>
    <property type="match status" value="1"/>
</dbReference>
<feature type="chain" id="PRO_0000137090" description="Nucleoside diphosphate kinase">
    <location>
        <begin position="1"/>
        <end position="149"/>
    </location>
</feature>
<feature type="active site" description="Pros-phosphohistidine intermediate" evidence="1">
    <location>
        <position position="115"/>
    </location>
</feature>
<feature type="binding site" evidence="1">
    <location>
        <position position="9"/>
    </location>
    <ligand>
        <name>ATP</name>
        <dbReference type="ChEBI" id="CHEBI:30616"/>
    </ligand>
</feature>
<feature type="binding site" evidence="1">
    <location>
        <position position="57"/>
    </location>
    <ligand>
        <name>ATP</name>
        <dbReference type="ChEBI" id="CHEBI:30616"/>
    </ligand>
</feature>
<feature type="binding site" evidence="1">
    <location>
        <position position="85"/>
    </location>
    <ligand>
        <name>ATP</name>
        <dbReference type="ChEBI" id="CHEBI:30616"/>
    </ligand>
</feature>
<feature type="binding site" evidence="1">
    <location>
        <position position="91"/>
    </location>
    <ligand>
        <name>ATP</name>
        <dbReference type="ChEBI" id="CHEBI:30616"/>
    </ligand>
</feature>
<feature type="binding site" evidence="1">
    <location>
        <position position="102"/>
    </location>
    <ligand>
        <name>ATP</name>
        <dbReference type="ChEBI" id="CHEBI:30616"/>
    </ligand>
</feature>
<feature type="binding site" evidence="1">
    <location>
        <position position="112"/>
    </location>
    <ligand>
        <name>ATP</name>
        <dbReference type="ChEBI" id="CHEBI:30616"/>
    </ligand>
</feature>
<evidence type="ECO:0000255" key="1">
    <source>
        <dbReference type="HAMAP-Rule" id="MF_00451"/>
    </source>
</evidence>
<evidence type="ECO:0000305" key="2"/>
<name>NDK_METAC</name>
<protein>
    <recommendedName>
        <fullName evidence="1">Nucleoside diphosphate kinase</fullName>
        <shortName evidence="1">NDK</shortName>
        <shortName evidence="1">NDP kinase</shortName>
        <ecNumber evidence="1">2.7.4.6</ecNumber>
    </recommendedName>
    <alternativeName>
        <fullName evidence="1">Nucleoside-2-P kinase</fullName>
    </alternativeName>
</protein>
<accession>Q8TQL6</accession>
<keyword id="KW-0067">ATP-binding</keyword>
<keyword id="KW-0963">Cytoplasm</keyword>
<keyword id="KW-0418">Kinase</keyword>
<keyword id="KW-0460">Magnesium</keyword>
<keyword id="KW-0479">Metal-binding</keyword>
<keyword id="KW-0546">Nucleotide metabolism</keyword>
<keyword id="KW-0547">Nucleotide-binding</keyword>
<keyword id="KW-0597">Phosphoprotein</keyword>
<keyword id="KW-1185">Reference proteome</keyword>
<keyword id="KW-0808">Transferase</keyword>
<gene>
    <name evidence="1" type="primary">ndk</name>
    <name type="ordered locus">MA_1524</name>
</gene>
<proteinExistence type="inferred from homology"/>
<comment type="function">
    <text evidence="1">Major role in the synthesis of nucleoside triphosphates other than ATP. The ATP gamma phosphate is transferred to the NDP beta phosphate via a ping-pong mechanism, using a phosphorylated active-site intermediate.</text>
</comment>
<comment type="catalytic activity">
    <reaction evidence="1">
        <text>a 2'-deoxyribonucleoside 5'-diphosphate + ATP = a 2'-deoxyribonucleoside 5'-triphosphate + ADP</text>
        <dbReference type="Rhea" id="RHEA:44640"/>
        <dbReference type="ChEBI" id="CHEBI:30616"/>
        <dbReference type="ChEBI" id="CHEBI:61560"/>
        <dbReference type="ChEBI" id="CHEBI:73316"/>
        <dbReference type="ChEBI" id="CHEBI:456216"/>
        <dbReference type="EC" id="2.7.4.6"/>
    </reaction>
</comment>
<comment type="catalytic activity">
    <reaction evidence="1">
        <text>a ribonucleoside 5'-diphosphate + ATP = a ribonucleoside 5'-triphosphate + ADP</text>
        <dbReference type="Rhea" id="RHEA:18113"/>
        <dbReference type="ChEBI" id="CHEBI:30616"/>
        <dbReference type="ChEBI" id="CHEBI:57930"/>
        <dbReference type="ChEBI" id="CHEBI:61557"/>
        <dbReference type="ChEBI" id="CHEBI:456216"/>
        <dbReference type="EC" id="2.7.4.6"/>
    </reaction>
</comment>
<comment type="cofactor">
    <cofactor evidence="1">
        <name>Mg(2+)</name>
        <dbReference type="ChEBI" id="CHEBI:18420"/>
    </cofactor>
</comment>
<comment type="subcellular location">
    <subcellularLocation>
        <location evidence="1">Cytoplasm</location>
    </subcellularLocation>
</comment>
<comment type="similarity">
    <text evidence="1">Belongs to the NDK family.</text>
</comment>
<comment type="sequence caution" evidence="2">
    <conflict type="erroneous initiation">
        <sequence resource="EMBL-CDS" id="AAM04938"/>
    </conflict>
</comment>
<organism>
    <name type="scientific">Methanosarcina acetivorans (strain ATCC 35395 / DSM 2834 / JCM 12185 / C2A)</name>
    <dbReference type="NCBI Taxonomy" id="188937"/>
    <lineage>
        <taxon>Archaea</taxon>
        <taxon>Methanobacteriati</taxon>
        <taxon>Methanobacteriota</taxon>
        <taxon>Stenosarchaea group</taxon>
        <taxon>Methanomicrobia</taxon>
        <taxon>Methanosarcinales</taxon>
        <taxon>Methanosarcinaceae</taxon>
        <taxon>Methanosarcina</taxon>
    </lineage>
</organism>
<reference key="1">
    <citation type="journal article" date="2002" name="Genome Res.">
        <title>The genome of Methanosarcina acetivorans reveals extensive metabolic and physiological diversity.</title>
        <authorList>
            <person name="Galagan J.E."/>
            <person name="Nusbaum C."/>
            <person name="Roy A."/>
            <person name="Endrizzi M.G."/>
            <person name="Macdonald P."/>
            <person name="FitzHugh W."/>
            <person name="Calvo S."/>
            <person name="Engels R."/>
            <person name="Smirnov S."/>
            <person name="Atnoor D."/>
            <person name="Brown A."/>
            <person name="Allen N."/>
            <person name="Naylor J."/>
            <person name="Stange-Thomann N."/>
            <person name="DeArellano K."/>
            <person name="Johnson R."/>
            <person name="Linton L."/>
            <person name="McEwan P."/>
            <person name="McKernan K."/>
            <person name="Talamas J."/>
            <person name="Tirrell A."/>
            <person name="Ye W."/>
            <person name="Zimmer A."/>
            <person name="Barber R.D."/>
            <person name="Cann I."/>
            <person name="Graham D.E."/>
            <person name="Grahame D.A."/>
            <person name="Guss A.M."/>
            <person name="Hedderich R."/>
            <person name="Ingram-Smith C."/>
            <person name="Kuettner H.C."/>
            <person name="Krzycki J.A."/>
            <person name="Leigh J.A."/>
            <person name="Li W."/>
            <person name="Liu J."/>
            <person name="Mukhopadhyay B."/>
            <person name="Reeve J.N."/>
            <person name="Smith K."/>
            <person name="Springer T.A."/>
            <person name="Umayam L.A."/>
            <person name="White O."/>
            <person name="White R.H."/>
            <person name="de Macario E.C."/>
            <person name="Ferry J.G."/>
            <person name="Jarrell K.F."/>
            <person name="Jing H."/>
            <person name="Macario A.J.L."/>
            <person name="Paulsen I.T."/>
            <person name="Pritchett M."/>
            <person name="Sowers K.R."/>
            <person name="Swanson R.V."/>
            <person name="Zinder S.H."/>
            <person name="Lander E."/>
            <person name="Metcalf W.W."/>
            <person name="Birren B."/>
        </authorList>
    </citation>
    <scope>NUCLEOTIDE SEQUENCE [LARGE SCALE GENOMIC DNA]</scope>
    <source>
        <strain>ATCC 35395 / DSM 2834 / JCM 12185 / C2A</strain>
    </source>
</reference>